<sequence length="84" mass="9651">MRTVVFFILVSIFLVALKPTGTQAQIVDCWETWSRCTKWSQGGTGTLWKSCNDRCKELGRKRGQCEEKPSRCPLSKKAWTCICY</sequence>
<keyword id="KW-0002">3D-structure</keyword>
<keyword id="KW-0044">Antibiotic</keyword>
<keyword id="KW-0929">Antimicrobial</keyword>
<keyword id="KW-0903">Direct protein sequencing</keyword>
<keyword id="KW-1015">Disulfide bond</keyword>
<keyword id="KW-0391">Immunity</keyword>
<keyword id="KW-0399">Innate immunity</keyword>
<keyword id="KW-0472">Membrane</keyword>
<keyword id="KW-0873">Pyrrolidone carboxylic acid</keyword>
<keyword id="KW-1185">Reference proteome</keyword>
<keyword id="KW-0964">Secreted</keyword>
<keyword id="KW-0732">Signal</keyword>
<keyword id="KW-1052">Target cell membrane</keyword>
<keyword id="KW-1053">Target membrane</keyword>
<evidence type="ECO:0000255" key="1"/>
<evidence type="ECO:0000269" key="2">
    <source>
    </source>
</evidence>
<evidence type="ECO:0000269" key="3">
    <source>
    </source>
</evidence>
<evidence type="ECO:0000303" key="4">
    <source>
    </source>
</evidence>
<evidence type="ECO:0000303" key="5">
    <source>
    </source>
</evidence>
<evidence type="ECO:0000305" key="6"/>
<evidence type="ECO:0000312" key="7">
    <source>
        <dbReference type="EMBL" id="ABE26989.1"/>
    </source>
</evidence>
<evidence type="ECO:0007744" key="8">
    <source>
        <dbReference type="PDB" id="2K35"/>
    </source>
</evidence>
<evidence type="ECO:0007829" key="9">
    <source>
        <dbReference type="PDB" id="2K35"/>
    </source>
</evidence>
<name>HYDMA_HYDVU</name>
<dbReference type="EMBL" id="DQ449931">
    <property type="protein sequence ID" value="ABE26989.1"/>
    <property type="molecule type" value="mRNA"/>
</dbReference>
<dbReference type="EMBL" id="CX833582">
    <property type="status" value="NOT_ANNOTATED_CDS"/>
    <property type="molecule type" value="mRNA"/>
</dbReference>
<dbReference type="PDB" id="2K35">
    <property type="method" value="NMR"/>
    <property type="chains" value="A=25-84"/>
</dbReference>
<dbReference type="PDBsum" id="2K35"/>
<dbReference type="BMRB" id="B3RFR8"/>
<dbReference type="SMR" id="B3RFR8"/>
<dbReference type="EnsemblMetazoa" id="XM_047274969.1">
    <property type="protein sequence ID" value="XP_047130925.1"/>
    <property type="gene ID" value="LOC124810311"/>
</dbReference>
<dbReference type="OrthoDB" id="9988549at2759"/>
<dbReference type="EvolutionaryTrace" id="B3RFR8"/>
<dbReference type="Proteomes" id="UP000694840">
    <property type="component" value="Unplaced"/>
</dbReference>
<dbReference type="GO" id="GO:0005576">
    <property type="term" value="C:extracellular region"/>
    <property type="evidence" value="ECO:0007669"/>
    <property type="project" value="UniProtKB-SubCell"/>
</dbReference>
<dbReference type="GO" id="GO:0016020">
    <property type="term" value="C:membrane"/>
    <property type="evidence" value="ECO:0007669"/>
    <property type="project" value="UniProtKB-KW"/>
</dbReference>
<dbReference type="GO" id="GO:0044218">
    <property type="term" value="C:other organism cell membrane"/>
    <property type="evidence" value="ECO:0007669"/>
    <property type="project" value="UniProtKB-KW"/>
</dbReference>
<dbReference type="GO" id="GO:0042742">
    <property type="term" value="P:defense response to bacterium"/>
    <property type="evidence" value="ECO:0007669"/>
    <property type="project" value="UniProtKB-KW"/>
</dbReference>
<dbReference type="GO" id="GO:0045087">
    <property type="term" value="P:innate immune response"/>
    <property type="evidence" value="ECO:0007669"/>
    <property type="project" value="UniProtKB-KW"/>
</dbReference>
<dbReference type="Gene3D" id="3.30.30.100">
    <property type="match status" value="1"/>
</dbReference>
<dbReference type="InterPro" id="IPR029230">
    <property type="entry name" value="Macin"/>
</dbReference>
<dbReference type="InterPro" id="IPR038456">
    <property type="entry name" value="Macin_sf"/>
</dbReference>
<dbReference type="Pfam" id="PF14865">
    <property type="entry name" value="Macin"/>
    <property type="match status" value="1"/>
</dbReference>
<organism>
    <name type="scientific">Hydra vulgaris</name>
    <name type="common">Hydra</name>
    <name type="synonym">Hydra attenuata</name>
    <dbReference type="NCBI Taxonomy" id="6087"/>
    <lineage>
        <taxon>Eukaryota</taxon>
        <taxon>Metazoa</taxon>
        <taxon>Cnidaria</taxon>
        <taxon>Hydrozoa</taxon>
        <taxon>Hydroidolina</taxon>
        <taxon>Anthoathecata</taxon>
        <taxon>Aplanulata</taxon>
        <taxon>Hydridae</taxon>
        <taxon>Hydra</taxon>
    </lineage>
</organism>
<feature type="signal peptide" evidence="1">
    <location>
        <begin position="1"/>
        <end position="24"/>
    </location>
</feature>
<feature type="chain" id="PRO_0000394509" description="Hydramacin-1" evidence="2">
    <location>
        <begin position="25"/>
        <end position="84"/>
    </location>
</feature>
<feature type="modified residue" description="Pyrrolidone carboxylic acid" evidence="2">
    <location>
        <position position="25"/>
    </location>
</feature>
<feature type="disulfide bond" evidence="3 8">
    <location>
        <begin position="29"/>
        <end position="72"/>
    </location>
</feature>
<feature type="disulfide bond" evidence="3 8">
    <location>
        <begin position="36"/>
        <end position="65"/>
    </location>
</feature>
<feature type="disulfide bond" evidence="3 8">
    <location>
        <begin position="51"/>
        <end position="81"/>
    </location>
</feature>
<feature type="disulfide bond" evidence="3 8">
    <location>
        <begin position="55"/>
        <end position="83"/>
    </location>
</feature>
<feature type="strand" evidence="9">
    <location>
        <begin position="30"/>
        <end position="32"/>
    </location>
</feature>
<feature type="helix" evidence="9">
    <location>
        <begin position="33"/>
        <end position="38"/>
    </location>
</feature>
<feature type="turn" evidence="9">
    <location>
        <begin position="41"/>
        <end position="44"/>
    </location>
</feature>
<feature type="helix" evidence="9">
    <location>
        <begin position="50"/>
        <end position="56"/>
    </location>
</feature>
<feature type="turn" evidence="9">
    <location>
        <begin position="57"/>
        <end position="59"/>
    </location>
</feature>
<feature type="strand" evidence="9">
    <location>
        <begin position="63"/>
        <end position="67"/>
    </location>
</feature>
<feature type="helix" evidence="9">
    <location>
        <begin position="69"/>
        <end position="71"/>
    </location>
</feature>
<feature type="turn" evidence="9">
    <location>
        <begin position="75"/>
        <end position="77"/>
    </location>
</feature>
<feature type="strand" evidence="9">
    <location>
        <begin position="79"/>
        <end position="83"/>
    </location>
</feature>
<protein>
    <recommendedName>
        <fullName evidence="4 5">Hydramacin-1</fullName>
        <shortName evidence="4 5">Hm-1</shortName>
    </recommendedName>
</protein>
<proteinExistence type="evidence at protein level"/>
<accession>B3RFR8</accession>
<comment type="function">
    <text evidence="2 3">Cationic antimicrobial peptide potently active against Gram-positive and Gram-negative bacteria including multi-resistant human pathogenic strains. Is not active against the Gram-positive Coccus species, Gram-negative non-fermentation species and against the fungus C.albicans. It leads to aggregation of bacteria as an initial step of its bactericidal mechanism. Aggregated cells are connected via electron-dense contacts and adopt a thorn apple-like morphology. Hydramycin contains a belt of positively charged residues that separate two hydrophobic areas. This structure may explain the observed aggregation of bacteria, since each of these areas can immerse into the outer leaflets of the membranes of two individual bacteria. Is able to permeabilize membranes of viable bacteria at low and neutral pH values, but no pore-forming activity is not detected.</text>
</comment>
<comment type="subcellular location">
    <subcellularLocation>
        <location evidence="2 3">Secreted</location>
    </subcellularLocation>
    <subcellularLocation>
        <location evidence="3">Target cell membrane</location>
    </subcellularLocation>
</comment>
<comment type="tissue specificity">
    <text evidence="2">Expressed in the endodermal epithelium.</text>
</comment>
<comment type="induction">
    <text evidence="2">By bacterial lipopolysaccharides (LPS).</text>
</comment>
<comment type="mass spectrometry" mass="6994.0" method="Electrospray" evidence="2"/>
<comment type="similarity">
    <text evidence="6">Belongs to the macin family.</text>
</comment>
<reference evidence="7" key="1">
    <citation type="journal article" date="2009" name="Dev. Comp. Immunol.">
        <title>Uncovering the evolutionary history of innate immunity: the simple metazoan Hydra uses epithelial cells for host defence.</title>
        <authorList>
            <person name="Bosch T.C.G."/>
            <person name="Augustin R."/>
            <person name="Anton-Erxleben F."/>
            <person name="Fraune S."/>
            <person name="Hemmrich G."/>
            <person name="Zill H."/>
            <person name="Rosenstiel P."/>
            <person name="Jacobs G."/>
            <person name="Schreiber S."/>
            <person name="Leippe M."/>
            <person name="Stanisak M."/>
            <person name="Groetzinger J."/>
            <person name="Jung S."/>
            <person name="Podschun R."/>
            <person name="Bartels J."/>
            <person name="Harder J."/>
            <person name="Schroeder J.-M."/>
        </authorList>
    </citation>
    <scope>NUCLEOTIDE SEQUENCE [MRNA]</scope>
    <scope>PROTEIN SEQUENCE OF 39-50</scope>
    <scope>FUNCTION</scope>
    <scope>SUBCELLULAR LOCATION</scope>
    <scope>TISSUE SPECIFICITY</scope>
    <scope>INDUCTION</scope>
    <scope>PYROGLUTAMATE FORMATION AT GLN-25</scope>
    <scope>MASS SPECTROMETRY</scope>
</reference>
<reference key="2">
    <citation type="journal article" date="2009" name="J. Biol. Chem.">
        <title>Hydramacin-1, structure and antibacterial activity of a protein from the basal metazoan Hydra.</title>
        <authorList>
            <person name="Jung S."/>
            <person name="Dingley A.J."/>
            <person name="Augustin R."/>
            <person name="Anton-Erxleben F."/>
            <person name="Stanisak M."/>
            <person name="Gelhaus C."/>
            <person name="Gutsmann T."/>
            <person name="Hammer M.U."/>
            <person name="Podschun R."/>
            <person name="Bonvin A.M.J.J."/>
            <person name="Leippe M."/>
            <person name="Bosch T.C.G."/>
            <person name="Grotzinger J."/>
        </authorList>
    </citation>
    <scope>STRUCTURE BY NMR OF 25-84</scope>
    <scope>DISULFIDE BONDS</scope>
    <scope>FUNCTION</scope>
    <scope>SUBCELLULAR LOCATION</scope>
</reference>